<sequence>MNNNKEVPQNSVAVSSSSSAPITVISPQQDANNFIKKRRTALRNRIYAIVRHKQKQHQIFLDKKNQQQQQRVDDATQRALLEKQDQQCIAATRMIEEELLKSSRSFEEYFDLRTFDARVRTILQQLGTMLSQRRAAAAAMNNGEAQCITSTRAVHTSISVSNSFQCGRSLVPINCTTATAGAFSIGPDMQTHHSTGANHQMVEVNRPNMNQITCGISSPLITGFNGNCVPVSANIPMTSQDLFNATHFSTLPQPFLQPPPDQSHMHRYSMSNVASFGQSNPYPCGVVMSSGSMAVAQNSIPWNNPNPMQGLDPTVTSYHSNLQPMQQTPLPKRQLHHPLWNTNFQSAPNNRDNLPQVSQQLSNHGSRQHRGQHSQNLYPGQLQNQDRLLPNLTQQAMALAAPVMHVPSKQVNEDCGQTSSNTVLRWIPFMFHARHCKAKKDKCASKFCFQARKIVKHIDCCKVPNCKYRYCLGTRMWLDHFKQCKSISCRTCVAVREYMEKNKYTIVPLRRAKCSSASSKCQPKKSSKSRQAYKKGGAEAPSVDADLQRSIKRPKLHRPSQNITPETKSISVTGCGVVCKPHSLMNMQEKDGLQSLKVEAMPMDIDVPGASEIPVTRELVKHVAEDTPKGNNCGGFAMVEKTSCLLAQGKSKCMNEMSAPKEENVKQSVEVVDASKMEISSLVELFTPEQVKEHIRSLRQWVGQSKTKAEKNKAMGCSMSVNSCQLCAVEWLVFEPVPIYCSPCGIRIKKNALHYSIAVGESRHYVCAPCYNEAREKLVFLDGTSIPKTRLQKKKNDEQVPEGWVQCDKCEAWQHIICALFNSRRNHGESTKYTCPSCYIQEVEQRERRPLPLSAVPGATSLPVTSLSKHLEERLFKKLKEERQERARLQGKTYEEVPGAESLTVRVVASVDKVLEVKERFLELFREENYPSEFPYKSKAIFLFQKIENVEVCLFGMFVQEFGTDSGPPNERRVYLSYLDSVKYFRPTFRTVSGEALRTFVYHEILIGYLDYCKKRGFTSCYIWACPPLKGDDYILYCHPEIQKTPKTDKLREWYLAMLRKASKEDVVVECTNLYNHFFVQSGECRANVTAARLPYFDGDYWPSAAEDLLRQMNQEDDGETKLHRKGLTKKVISKRALKAVGQLDLSLNASKDRLMMQKLGETICPMKEDFIMVHLQHCCKHCTTLMVSGNRWVCNHCKNFQICDKCYEVEQNRINIERHPINQKEKHALFPVAIKDVPTKIEDKDNNLESEFFHNRQAFLNLCQGNNYQYETLRRAKHSSMMILYHLHNPTAPAFATVCTICQQEVENSQGWHCEVCPGYDVCSACYSKDSINHSHKLTSRSSSTDSTVVQQNGQASQSYQVKLEKLKKLLVHAATCRSTQCQYQGCRKSKMLFRHCIDCTTGDCPICKGLWSLLKLHARNCRDSKCTVPKCSGLRAISRRKQQQADKRRRAAVMEMMRERAAEATRTG</sequence>
<gene>
    <name type="primary">HAC4</name>
    <name type="synonym">PCAT3</name>
    <name type="ordered locus">At1g55970</name>
    <name type="ORF">F14J16.27</name>
    <name type="ORF">T6H22.22</name>
</gene>
<feature type="chain" id="PRO_0000269742" description="Histone acetyltransferase HAC4">
    <location>
        <begin position="1"/>
        <end position="1470"/>
    </location>
</feature>
<feature type="domain" description="CBP/p300-type HAT" evidence="5">
    <location>
        <begin position="856"/>
        <end position="1293"/>
    </location>
</feature>
<feature type="zinc finger region" description="TAZ-type 1" evidence="3">
    <location>
        <begin position="416"/>
        <end position="495"/>
    </location>
</feature>
<feature type="zinc finger region" description="PHD-type">
    <location>
        <begin position="764"/>
        <end position="841"/>
    </location>
</feature>
<feature type="zinc finger region" description="ZZ-type 1" evidence="4">
    <location>
        <begin position="1175"/>
        <end position="1238"/>
    </location>
</feature>
<feature type="zinc finger region" description="ZZ-type 2" evidence="4">
    <location>
        <begin position="1295"/>
        <end position="1347"/>
    </location>
</feature>
<feature type="zinc finger region" description="TAZ-type 2" evidence="3">
    <location>
        <begin position="1358"/>
        <end position="1436"/>
    </location>
</feature>
<feature type="region of interest" description="Disordered" evidence="6">
    <location>
        <begin position="1"/>
        <end position="20"/>
    </location>
</feature>
<feature type="region of interest" description="Disordered" evidence="6">
    <location>
        <begin position="342"/>
        <end position="376"/>
    </location>
</feature>
<feature type="region of interest" description="Disordered" evidence="6">
    <location>
        <begin position="518"/>
        <end position="566"/>
    </location>
</feature>
<feature type="compositionally biased region" description="Polar residues" evidence="6">
    <location>
        <begin position="1"/>
        <end position="10"/>
    </location>
</feature>
<feature type="compositionally biased region" description="Low complexity" evidence="6">
    <location>
        <begin position="11"/>
        <end position="20"/>
    </location>
</feature>
<feature type="compositionally biased region" description="Polar residues" evidence="6">
    <location>
        <begin position="342"/>
        <end position="365"/>
    </location>
</feature>
<feature type="compositionally biased region" description="Basic residues" evidence="6">
    <location>
        <begin position="522"/>
        <end position="533"/>
    </location>
</feature>
<feature type="binding site" evidence="1">
    <location>
        <begin position="979"/>
        <end position="981"/>
    </location>
    <ligand>
        <name>acetyl-CoA</name>
        <dbReference type="ChEBI" id="CHEBI:57288"/>
    </ligand>
</feature>
<feature type="binding site" evidence="1">
    <location>
        <begin position="998"/>
        <end position="999"/>
    </location>
    <ligand>
        <name>acetyl-CoA</name>
        <dbReference type="ChEBI" id="CHEBI:57288"/>
    </ligand>
</feature>
<feature type="binding site" evidence="1">
    <location>
        <position position="1054"/>
    </location>
    <ligand>
        <name>acetyl-CoA</name>
        <dbReference type="ChEBI" id="CHEBI:57288"/>
    </ligand>
</feature>
<feature type="binding site" evidence="4">
    <location>
        <position position="1180"/>
    </location>
    <ligand>
        <name>Zn(2+)</name>
        <dbReference type="ChEBI" id="CHEBI:29105"/>
        <label>1</label>
    </ligand>
</feature>
<feature type="binding site" evidence="4">
    <location>
        <position position="1183"/>
    </location>
    <ligand>
        <name>Zn(2+)</name>
        <dbReference type="ChEBI" id="CHEBI:29105"/>
        <label>1</label>
    </ligand>
</feature>
<feature type="binding site" evidence="4">
    <location>
        <position position="1195"/>
    </location>
    <ligand>
        <name>Zn(2+)</name>
        <dbReference type="ChEBI" id="CHEBI:29105"/>
        <label>2</label>
    </ligand>
</feature>
<feature type="binding site" evidence="4">
    <location>
        <position position="1198"/>
    </location>
    <ligand>
        <name>Zn(2+)</name>
        <dbReference type="ChEBI" id="CHEBI:29105"/>
        <label>2</label>
    </ligand>
</feature>
<feature type="binding site" evidence="4">
    <location>
        <position position="1204"/>
    </location>
    <ligand>
        <name>Zn(2+)</name>
        <dbReference type="ChEBI" id="CHEBI:29105"/>
        <label>1</label>
    </ligand>
</feature>
<feature type="binding site" evidence="4">
    <location>
        <position position="1207"/>
    </location>
    <ligand>
        <name>Zn(2+)</name>
        <dbReference type="ChEBI" id="CHEBI:29105"/>
        <label>1</label>
    </ligand>
</feature>
<feature type="binding site" evidence="4">
    <location>
        <position position="1220"/>
    </location>
    <ligand>
        <name>Zn(2+)</name>
        <dbReference type="ChEBI" id="CHEBI:29105"/>
        <label>2</label>
    </ligand>
</feature>
<feature type="binding site" evidence="4">
    <location>
        <position position="1228"/>
    </location>
    <ligand>
        <name>Zn(2+)</name>
        <dbReference type="ChEBI" id="CHEBI:29105"/>
        <label>2</label>
    </ligand>
</feature>
<feature type="binding site" evidence="4">
    <location>
        <position position="1300"/>
    </location>
    <ligand>
        <name>Zn(2+)</name>
        <dbReference type="ChEBI" id="CHEBI:29105"/>
        <label>3</label>
    </ligand>
</feature>
<feature type="binding site" evidence="4">
    <location>
        <position position="1303"/>
    </location>
    <ligand>
        <name>Zn(2+)</name>
        <dbReference type="ChEBI" id="CHEBI:29105"/>
        <label>3</label>
    </ligand>
</feature>
<feature type="binding site" evidence="4">
    <location>
        <position position="1315"/>
    </location>
    <ligand>
        <name>Zn(2+)</name>
        <dbReference type="ChEBI" id="CHEBI:29105"/>
        <label>4</label>
    </ligand>
</feature>
<feature type="binding site" evidence="4">
    <location>
        <position position="1318"/>
    </location>
    <ligand>
        <name>Zn(2+)</name>
        <dbReference type="ChEBI" id="CHEBI:29105"/>
        <label>4</label>
    </ligand>
</feature>
<feature type="binding site" evidence="4">
    <location>
        <position position="1324"/>
    </location>
    <ligand>
        <name>Zn(2+)</name>
        <dbReference type="ChEBI" id="CHEBI:29105"/>
        <label>3</label>
    </ligand>
</feature>
<feature type="binding site" evidence="4">
    <location>
        <position position="1327"/>
    </location>
    <ligand>
        <name>Zn(2+)</name>
        <dbReference type="ChEBI" id="CHEBI:29105"/>
        <label>3</label>
    </ligand>
</feature>
<feature type="binding site" evidence="4">
    <location>
        <position position="1335"/>
    </location>
    <ligand>
        <name>Zn(2+)</name>
        <dbReference type="ChEBI" id="CHEBI:29105"/>
        <label>4</label>
    </ligand>
</feature>
<feature type="binding site" evidence="4">
    <location>
        <position position="1337"/>
    </location>
    <ligand>
        <name>Zn(2+)</name>
        <dbReference type="ChEBI" id="CHEBI:29105"/>
        <label>4</label>
    </ligand>
</feature>
<protein>
    <recommendedName>
        <fullName>Histone acetyltransferase HAC4</fullName>
        <ecNumber evidence="2">2.3.1.48</ecNumber>
    </recommendedName>
</protein>
<dbReference type="EC" id="2.3.1.48" evidence="2"/>
<dbReference type="EMBL" id="AC002304">
    <property type="protein sequence ID" value="AAF79331.1"/>
    <property type="status" value="ALT_SEQ"/>
    <property type="molecule type" value="Genomic_DNA"/>
</dbReference>
<dbReference type="EMBL" id="AC009894">
    <property type="protein sequence ID" value="AAF02849.1"/>
    <property type="status" value="ALT_SEQ"/>
    <property type="molecule type" value="Genomic_DNA"/>
</dbReference>
<dbReference type="EMBL" id="CP002684">
    <property type="status" value="NOT_ANNOTATED_CDS"/>
    <property type="molecule type" value="Genomic_DNA"/>
</dbReference>
<dbReference type="EMBL" id="AH011643">
    <property type="protein sequence ID" value="AAM34789.1"/>
    <property type="molecule type" value="mRNA"/>
</dbReference>
<dbReference type="EMBL" id="AH011643">
    <property type="protein sequence ID" value="AAM34790.1"/>
    <property type="molecule type" value="mRNA"/>
</dbReference>
<dbReference type="EMBL" id="AF389513">
    <property type="protein sequence ID" value="AAK73519.1"/>
    <property type="status" value="ALT_FRAME"/>
    <property type="molecule type" value="mRNA"/>
</dbReference>
<dbReference type="SMR" id="Q9LG11"/>
<dbReference type="STRING" id="3702.Q9LG11"/>
<dbReference type="PaxDb" id="3702-AT1G55970.1"/>
<dbReference type="PeptideAtlas" id="Q9LG11"/>
<dbReference type="Araport" id="AT1G55970"/>
<dbReference type="TAIR" id="AT1G55970">
    <property type="gene designation" value="HAC4"/>
</dbReference>
<dbReference type="eggNOG" id="KOG1778">
    <property type="taxonomic scope" value="Eukaryota"/>
</dbReference>
<dbReference type="HOGENOM" id="CLU_002956_2_0_1"/>
<dbReference type="InParanoid" id="Q9LG11"/>
<dbReference type="PhylomeDB" id="Q9LG11"/>
<dbReference type="PRO" id="PR:Q9LG11"/>
<dbReference type="Proteomes" id="UP000006548">
    <property type="component" value="Chromosome 1"/>
</dbReference>
<dbReference type="ExpressionAtlas" id="Q9LG11">
    <property type="expression patterns" value="baseline and differential"/>
</dbReference>
<dbReference type="GO" id="GO:0000123">
    <property type="term" value="C:histone acetyltransferase complex"/>
    <property type="evidence" value="ECO:0000318"/>
    <property type="project" value="GO_Central"/>
</dbReference>
<dbReference type="GO" id="GO:0005634">
    <property type="term" value="C:nucleus"/>
    <property type="evidence" value="ECO:0007669"/>
    <property type="project" value="UniProtKB-SubCell"/>
</dbReference>
<dbReference type="GO" id="GO:0005667">
    <property type="term" value="C:transcription regulator complex"/>
    <property type="evidence" value="ECO:0000318"/>
    <property type="project" value="GO_Central"/>
</dbReference>
<dbReference type="GO" id="GO:0031490">
    <property type="term" value="F:chromatin DNA binding"/>
    <property type="evidence" value="ECO:0000318"/>
    <property type="project" value="GO_Central"/>
</dbReference>
<dbReference type="GO" id="GO:0004402">
    <property type="term" value="F:histone acetyltransferase activity"/>
    <property type="evidence" value="ECO:0000318"/>
    <property type="project" value="GO_Central"/>
</dbReference>
<dbReference type="GO" id="GO:0003713">
    <property type="term" value="F:transcription coactivator activity"/>
    <property type="evidence" value="ECO:0000318"/>
    <property type="project" value="GO_Central"/>
</dbReference>
<dbReference type="GO" id="GO:0008270">
    <property type="term" value="F:zinc ion binding"/>
    <property type="evidence" value="ECO:0007669"/>
    <property type="project" value="UniProtKB-KW"/>
</dbReference>
<dbReference type="GO" id="GO:0045944">
    <property type="term" value="P:positive regulation of transcription by RNA polymerase II"/>
    <property type="evidence" value="ECO:0000318"/>
    <property type="project" value="GO_Central"/>
</dbReference>
<dbReference type="CDD" id="cd15614">
    <property type="entry name" value="PHD_HAC_like"/>
    <property type="match status" value="1"/>
</dbReference>
<dbReference type="FunFam" id="3.30.60.90:FF:000022">
    <property type="entry name" value="Histone acetyltransferase of the CBP family 12"/>
    <property type="match status" value="1"/>
</dbReference>
<dbReference type="Gene3D" id="3.30.60.90">
    <property type="match status" value="2"/>
</dbReference>
<dbReference type="Gene3D" id="1.20.1020.10">
    <property type="entry name" value="TAZ domain"/>
    <property type="match status" value="2"/>
</dbReference>
<dbReference type="Gene3D" id="3.30.40.10">
    <property type="entry name" value="Zinc/RING finger domain, C3HC4 (zinc finger)"/>
    <property type="match status" value="1"/>
</dbReference>
<dbReference type="InterPro" id="IPR031162">
    <property type="entry name" value="CBP_P300_HAT"/>
</dbReference>
<dbReference type="InterPro" id="IPR013178">
    <property type="entry name" value="Histone_AcTrfase_Rtt109/CBP"/>
</dbReference>
<dbReference type="InterPro" id="IPR035898">
    <property type="entry name" value="TAZ_dom_sf"/>
</dbReference>
<dbReference type="InterPro" id="IPR019786">
    <property type="entry name" value="Zinc_finger_PHD-type_CS"/>
</dbReference>
<dbReference type="InterPro" id="IPR011011">
    <property type="entry name" value="Znf_FYVE_PHD"/>
</dbReference>
<dbReference type="InterPro" id="IPR019787">
    <property type="entry name" value="Znf_PHD-finger"/>
</dbReference>
<dbReference type="InterPro" id="IPR013083">
    <property type="entry name" value="Znf_RING/FYVE/PHD"/>
</dbReference>
<dbReference type="InterPro" id="IPR000197">
    <property type="entry name" value="Znf_TAZ"/>
</dbReference>
<dbReference type="InterPro" id="IPR000433">
    <property type="entry name" value="Znf_ZZ"/>
</dbReference>
<dbReference type="InterPro" id="IPR043145">
    <property type="entry name" value="Znf_ZZ_sf"/>
</dbReference>
<dbReference type="PANTHER" id="PTHR13808">
    <property type="entry name" value="CBP/P300-RELATED"/>
    <property type="match status" value="1"/>
</dbReference>
<dbReference type="PANTHER" id="PTHR13808:SF1">
    <property type="entry name" value="HISTONE ACETYLTRANSFERASE"/>
    <property type="match status" value="1"/>
</dbReference>
<dbReference type="Pfam" id="PF08214">
    <property type="entry name" value="HAT_KAT11"/>
    <property type="match status" value="1"/>
</dbReference>
<dbReference type="Pfam" id="PF00628">
    <property type="entry name" value="PHD"/>
    <property type="match status" value="1"/>
</dbReference>
<dbReference type="Pfam" id="PF02135">
    <property type="entry name" value="zf-TAZ"/>
    <property type="match status" value="2"/>
</dbReference>
<dbReference type="Pfam" id="PF00569">
    <property type="entry name" value="ZZ"/>
    <property type="match status" value="1"/>
</dbReference>
<dbReference type="SMART" id="SM01250">
    <property type="entry name" value="KAT11"/>
    <property type="match status" value="1"/>
</dbReference>
<dbReference type="SMART" id="SM00551">
    <property type="entry name" value="ZnF_TAZ"/>
    <property type="match status" value="2"/>
</dbReference>
<dbReference type="SMART" id="SM00291">
    <property type="entry name" value="ZnF_ZZ"/>
    <property type="match status" value="2"/>
</dbReference>
<dbReference type="SUPFAM" id="SSF57903">
    <property type="entry name" value="FYVE/PHD zinc finger"/>
    <property type="match status" value="1"/>
</dbReference>
<dbReference type="SUPFAM" id="SSF57850">
    <property type="entry name" value="RING/U-box"/>
    <property type="match status" value="2"/>
</dbReference>
<dbReference type="SUPFAM" id="SSF57933">
    <property type="entry name" value="TAZ domain"/>
    <property type="match status" value="2"/>
</dbReference>
<dbReference type="PROSITE" id="PS51727">
    <property type="entry name" value="CBP_P300_HAT"/>
    <property type="match status" value="1"/>
</dbReference>
<dbReference type="PROSITE" id="PS01359">
    <property type="entry name" value="ZF_PHD_1"/>
    <property type="match status" value="1"/>
</dbReference>
<dbReference type="PROSITE" id="PS50134">
    <property type="entry name" value="ZF_TAZ"/>
    <property type="match status" value="2"/>
</dbReference>
<dbReference type="PROSITE" id="PS01357">
    <property type="entry name" value="ZF_ZZ_1"/>
    <property type="match status" value="2"/>
</dbReference>
<dbReference type="PROSITE" id="PS50135">
    <property type="entry name" value="ZF_ZZ_2"/>
    <property type="match status" value="2"/>
</dbReference>
<evidence type="ECO:0000250" key="1">
    <source>
        <dbReference type="UniProtKB" id="Q09472"/>
    </source>
</evidence>
<evidence type="ECO:0000250" key="2">
    <source>
        <dbReference type="UniProtKB" id="Q9C5X9"/>
    </source>
</evidence>
<evidence type="ECO:0000255" key="3">
    <source>
        <dbReference type="PROSITE-ProRule" id="PRU00203"/>
    </source>
</evidence>
<evidence type="ECO:0000255" key="4">
    <source>
        <dbReference type="PROSITE-ProRule" id="PRU00228"/>
    </source>
</evidence>
<evidence type="ECO:0000255" key="5">
    <source>
        <dbReference type="PROSITE-ProRule" id="PRU01065"/>
    </source>
</evidence>
<evidence type="ECO:0000256" key="6">
    <source>
        <dbReference type="SAM" id="MobiDB-lite"/>
    </source>
</evidence>
<evidence type="ECO:0000269" key="7">
    <source>
    </source>
</evidence>
<evidence type="ECO:0000305" key="8"/>
<keyword id="KW-0010">Activator</keyword>
<keyword id="KW-0012">Acyltransferase</keyword>
<keyword id="KW-0156">Chromatin regulator</keyword>
<keyword id="KW-0479">Metal-binding</keyword>
<keyword id="KW-0539">Nucleus</keyword>
<keyword id="KW-1185">Reference proteome</keyword>
<keyword id="KW-0677">Repeat</keyword>
<keyword id="KW-0804">Transcription</keyword>
<keyword id="KW-0805">Transcription regulation</keyword>
<keyword id="KW-0808">Transferase</keyword>
<keyword id="KW-0862">Zinc</keyword>
<keyword id="KW-0863">Zinc-finger</keyword>
<organism>
    <name type="scientific">Arabidopsis thaliana</name>
    <name type="common">Mouse-ear cress</name>
    <dbReference type="NCBI Taxonomy" id="3702"/>
    <lineage>
        <taxon>Eukaryota</taxon>
        <taxon>Viridiplantae</taxon>
        <taxon>Streptophyta</taxon>
        <taxon>Embryophyta</taxon>
        <taxon>Tracheophyta</taxon>
        <taxon>Spermatophyta</taxon>
        <taxon>Magnoliopsida</taxon>
        <taxon>eudicotyledons</taxon>
        <taxon>Gunneridae</taxon>
        <taxon>Pentapetalae</taxon>
        <taxon>rosids</taxon>
        <taxon>malvids</taxon>
        <taxon>Brassicales</taxon>
        <taxon>Brassicaceae</taxon>
        <taxon>Camelineae</taxon>
        <taxon>Arabidopsis</taxon>
    </lineage>
</organism>
<comment type="function">
    <text evidence="2">Acetyltransferase enzyme. Acetylates histones, giving a specific tag for transcriptional activation.</text>
</comment>
<comment type="catalytic activity">
    <reaction evidence="2">
        <text>L-lysyl-[protein] + acetyl-CoA = N(6)-acetyl-L-lysyl-[protein] + CoA + H(+)</text>
        <dbReference type="Rhea" id="RHEA:45948"/>
        <dbReference type="Rhea" id="RHEA-COMP:9752"/>
        <dbReference type="Rhea" id="RHEA-COMP:10731"/>
        <dbReference type="ChEBI" id="CHEBI:15378"/>
        <dbReference type="ChEBI" id="CHEBI:29969"/>
        <dbReference type="ChEBI" id="CHEBI:57287"/>
        <dbReference type="ChEBI" id="CHEBI:57288"/>
        <dbReference type="ChEBI" id="CHEBI:61930"/>
        <dbReference type="EC" id="2.3.1.48"/>
    </reaction>
</comment>
<comment type="subcellular location">
    <subcellularLocation>
        <location evidence="8">Nucleus</location>
    </subcellularLocation>
</comment>
<comment type="tissue specificity">
    <text evidence="7">Rosette leaves, stems and flowers.</text>
</comment>
<comment type="developmental stage">
    <text evidence="7">Expressed in young seedlings.</text>
</comment>
<comment type="sequence caution" evidence="8">
    <conflict type="erroneous gene model prediction">
        <sequence resource="EMBL-CDS" id="AAF02849"/>
    </conflict>
</comment>
<comment type="sequence caution" evidence="8">
    <conflict type="erroneous gene model prediction">
        <sequence resource="EMBL-CDS" id="AAF79331"/>
    </conflict>
</comment>
<comment type="sequence caution" evidence="8">
    <conflict type="frameshift">
        <sequence resource="EMBL-CDS" id="AAK73519"/>
    </conflict>
</comment>
<accession>Q9LG11</accession>
<accession>F4I3I0</accession>
<accession>Q8LRK3</accession>
<accession>Q8LRK4</accession>
<accession>Q94EW2</accession>
<accession>Q9SGS6</accession>
<reference key="1">
    <citation type="journal article" date="2000" name="Nature">
        <title>Sequence and analysis of chromosome 1 of the plant Arabidopsis thaliana.</title>
        <authorList>
            <person name="Theologis A."/>
            <person name="Ecker J.R."/>
            <person name="Palm C.J."/>
            <person name="Federspiel N.A."/>
            <person name="Kaul S."/>
            <person name="White O."/>
            <person name="Alonso J."/>
            <person name="Altafi H."/>
            <person name="Araujo R."/>
            <person name="Bowman C.L."/>
            <person name="Brooks S.Y."/>
            <person name="Buehler E."/>
            <person name="Chan A."/>
            <person name="Chao Q."/>
            <person name="Chen H."/>
            <person name="Cheuk R.F."/>
            <person name="Chin C.W."/>
            <person name="Chung M.K."/>
            <person name="Conn L."/>
            <person name="Conway A.B."/>
            <person name="Conway A.R."/>
            <person name="Creasy T.H."/>
            <person name="Dewar K."/>
            <person name="Dunn P."/>
            <person name="Etgu P."/>
            <person name="Feldblyum T.V."/>
            <person name="Feng J.-D."/>
            <person name="Fong B."/>
            <person name="Fujii C.Y."/>
            <person name="Gill J.E."/>
            <person name="Goldsmith A.D."/>
            <person name="Haas B."/>
            <person name="Hansen N.F."/>
            <person name="Hughes B."/>
            <person name="Huizar L."/>
            <person name="Hunter J.L."/>
            <person name="Jenkins J."/>
            <person name="Johnson-Hopson C."/>
            <person name="Khan S."/>
            <person name="Khaykin E."/>
            <person name="Kim C.J."/>
            <person name="Koo H.L."/>
            <person name="Kremenetskaia I."/>
            <person name="Kurtz D.B."/>
            <person name="Kwan A."/>
            <person name="Lam B."/>
            <person name="Langin-Hooper S."/>
            <person name="Lee A."/>
            <person name="Lee J.M."/>
            <person name="Lenz C.A."/>
            <person name="Li J.H."/>
            <person name="Li Y.-P."/>
            <person name="Lin X."/>
            <person name="Liu S.X."/>
            <person name="Liu Z.A."/>
            <person name="Luros J.S."/>
            <person name="Maiti R."/>
            <person name="Marziali A."/>
            <person name="Militscher J."/>
            <person name="Miranda M."/>
            <person name="Nguyen M."/>
            <person name="Nierman W.C."/>
            <person name="Osborne B.I."/>
            <person name="Pai G."/>
            <person name="Peterson J."/>
            <person name="Pham P.K."/>
            <person name="Rizzo M."/>
            <person name="Rooney T."/>
            <person name="Rowley D."/>
            <person name="Sakano H."/>
            <person name="Salzberg S.L."/>
            <person name="Schwartz J.R."/>
            <person name="Shinn P."/>
            <person name="Southwick A.M."/>
            <person name="Sun H."/>
            <person name="Tallon L.J."/>
            <person name="Tambunga G."/>
            <person name="Toriumi M.J."/>
            <person name="Town C.D."/>
            <person name="Utterback T."/>
            <person name="Van Aken S."/>
            <person name="Vaysberg M."/>
            <person name="Vysotskaia V.S."/>
            <person name="Walker M."/>
            <person name="Wu D."/>
            <person name="Yu G."/>
            <person name="Fraser C.M."/>
            <person name="Venter J.C."/>
            <person name="Davis R.W."/>
        </authorList>
    </citation>
    <scope>NUCLEOTIDE SEQUENCE [LARGE SCALE GENOMIC DNA]</scope>
    <source>
        <strain>cv. Columbia</strain>
    </source>
</reference>
<reference key="2">
    <citation type="journal article" date="2017" name="Plant J.">
        <title>Araport11: a complete reannotation of the Arabidopsis thaliana reference genome.</title>
        <authorList>
            <person name="Cheng C.Y."/>
            <person name="Krishnakumar V."/>
            <person name="Chan A.P."/>
            <person name="Thibaud-Nissen F."/>
            <person name="Schobel S."/>
            <person name="Town C.D."/>
        </authorList>
    </citation>
    <scope>GENOME REANNOTATION</scope>
    <source>
        <strain>cv. Columbia</strain>
    </source>
</reference>
<reference key="3">
    <citation type="journal article" date="2002" name="Nucleic Acids Res.">
        <title>Analysis of histone acetyltransferase and histone deacetylase families of Arabidopsis thaliana suggests functional diversification of chromatin modification among multicellular eukaryotes.</title>
        <authorList>
            <person name="Pandey R."/>
            <person name="Mueller A."/>
            <person name="Napoli C.A."/>
            <person name="Selinger D.A."/>
            <person name="Pikaard C.S."/>
            <person name="Richards E.J."/>
            <person name="Bender J."/>
            <person name="Mount D.W."/>
            <person name="Jorgensen R.A."/>
        </authorList>
    </citation>
    <scope>NUCLEOTIDE SEQUENCE [MRNA] OF 10-760 AND 1086-1470</scope>
    <scope>NOMENCLATURE</scope>
</reference>
<reference key="4">
    <citation type="submission" date="2001-06" db="EMBL/GenBank/DDBJ databases">
        <authorList>
            <person name="Richards E.J."/>
        </authorList>
    </citation>
    <scope>NUCLEOTIDE SEQUENCE [MRNA] OF 772-1470</scope>
</reference>
<reference key="5">
    <citation type="journal article" date="2001" name="Nucleic Acids Res.">
        <title>Plant orthologs of p300/CBP: conservation of a core domain in metazoan p300/CBP acetyltransferase-related proteins.</title>
        <authorList>
            <person name="Bordoli L."/>
            <person name="Netsch M."/>
            <person name="Luethi U."/>
            <person name="Lutz W."/>
            <person name="Eckner R."/>
        </authorList>
    </citation>
    <scope>DEVELOPMENTAL STAGE</scope>
    <scope>TISSUE SPECIFICITY</scope>
</reference>
<name>HAC4_ARATH</name>
<proteinExistence type="evidence at transcript level"/>